<reference key="1">
    <citation type="journal article" date="2003" name="Biochim. Biophys. Acta">
        <title>Identification and characterization of two new members of the GRAS gene family in rice responsive to N-acetylchitooligosaccharide elicitor.</title>
        <authorList>
            <person name="Day R.B."/>
            <person name="Shibuya N."/>
            <person name="Minami E."/>
        </authorList>
    </citation>
    <scope>NUCLEOTIDE SEQUENCE [MRNA]</scope>
    <scope>FUNCTION</scope>
    <scope>SUBCELLULAR LOCATION</scope>
    <scope>INDUCTION</scope>
    <source>
        <strain>cv. Nipponbare</strain>
    </source>
</reference>
<reference key="2">
    <citation type="journal article" date="2005" name="Nature">
        <title>The map-based sequence of the rice genome.</title>
        <authorList>
            <consortium name="International rice genome sequencing project (IRGSP)"/>
        </authorList>
    </citation>
    <scope>NUCLEOTIDE SEQUENCE [LARGE SCALE GENOMIC DNA]</scope>
    <source>
        <strain>cv. Nipponbare</strain>
    </source>
</reference>
<reference key="3">
    <citation type="journal article" date="2008" name="Nucleic Acids Res.">
        <title>The rice annotation project database (RAP-DB): 2008 update.</title>
        <authorList>
            <consortium name="The rice annotation project (RAP)"/>
        </authorList>
    </citation>
    <scope>GENOME REANNOTATION</scope>
    <source>
        <strain>cv. Nipponbare</strain>
    </source>
</reference>
<reference key="4">
    <citation type="journal article" date="2013" name="Rice">
        <title>Improvement of the Oryza sativa Nipponbare reference genome using next generation sequence and optical map data.</title>
        <authorList>
            <person name="Kawahara Y."/>
            <person name="de la Bastide M."/>
            <person name="Hamilton J.P."/>
            <person name="Kanamori H."/>
            <person name="McCombie W.R."/>
            <person name="Ouyang S."/>
            <person name="Schwartz D.C."/>
            <person name="Tanaka T."/>
            <person name="Wu J."/>
            <person name="Zhou S."/>
            <person name="Childs K.L."/>
            <person name="Davidson R.M."/>
            <person name="Lin H."/>
            <person name="Quesada-Ocampo L."/>
            <person name="Vaillancourt B."/>
            <person name="Sakai H."/>
            <person name="Lee S.S."/>
            <person name="Kim J."/>
            <person name="Numa H."/>
            <person name="Itoh T."/>
            <person name="Buell C.R."/>
            <person name="Matsumoto T."/>
        </authorList>
    </citation>
    <scope>GENOME REANNOTATION</scope>
    <source>
        <strain>cv. Nipponbare</strain>
    </source>
</reference>
<reference key="5">
    <citation type="journal article" date="2005" name="PLoS Biol.">
        <title>The genomes of Oryza sativa: a history of duplications.</title>
        <authorList>
            <person name="Yu J."/>
            <person name="Wang J."/>
            <person name="Lin W."/>
            <person name="Li S."/>
            <person name="Li H."/>
            <person name="Zhou J."/>
            <person name="Ni P."/>
            <person name="Dong W."/>
            <person name="Hu S."/>
            <person name="Zeng C."/>
            <person name="Zhang J."/>
            <person name="Zhang Y."/>
            <person name="Li R."/>
            <person name="Xu Z."/>
            <person name="Li S."/>
            <person name="Li X."/>
            <person name="Zheng H."/>
            <person name="Cong L."/>
            <person name="Lin L."/>
            <person name="Yin J."/>
            <person name="Geng J."/>
            <person name="Li G."/>
            <person name="Shi J."/>
            <person name="Liu J."/>
            <person name="Lv H."/>
            <person name="Li J."/>
            <person name="Wang J."/>
            <person name="Deng Y."/>
            <person name="Ran L."/>
            <person name="Shi X."/>
            <person name="Wang X."/>
            <person name="Wu Q."/>
            <person name="Li C."/>
            <person name="Ren X."/>
            <person name="Wang J."/>
            <person name="Wang X."/>
            <person name="Li D."/>
            <person name="Liu D."/>
            <person name="Zhang X."/>
            <person name="Ji Z."/>
            <person name="Zhao W."/>
            <person name="Sun Y."/>
            <person name="Zhang Z."/>
            <person name="Bao J."/>
            <person name="Han Y."/>
            <person name="Dong L."/>
            <person name="Ji J."/>
            <person name="Chen P."/>
            <person name="Wu S."/>
            <person name="Liu J."/>
            <person name="Xiao Y."/>
            <person name="Bu D."/>
            <person name="Tan J."/>
            <person name="Yang L."/>
            <person name="Ye C."/>
            <person name="Zhang J."/>
            <person name="Xu J."/>
            <person name="Zhou Y."/>
            <person name="Yu Y."/>
            <person name="Zhang B."/>
            <person name="Zhuang S."/>
            <person name="Wei H."/>
            <person name="Liu B."/>
            <person name="Lei M."/>
            <person name="Yu H."/>
            <person name="Li Y."/>
            <person name="Xu H."/>
            <person name="Wei S."/>
            <person name="He X."/>
            <person name="Fang L."/>
            <person name="Zhang Z."/>
            <person name="Zhang Y."/>
            <person name="Huang X."/>
            <person name="Su Z."/>
            <person name="Tong W."/>
            <person name="Li J."/>
            <person name="Tong Z."/>
            <person name="Li S."/>
            <person name="Ye J."/>
            <person name="Wang L."/>
            <person name="Fang L."/>
            <person name="Lei T."/>
            <person name="Chen C.-S."/>
            <person name="Chen H.-C."/>
            <person name="Xu Z."/>
            <person name="Li H."/>
            <person name="Huang H."/>
            <person name="Zhang F."/>
            <person name="Xu H."/>
            <person name="Li N."/>
            <person name="Zhao C."/>
            <person name="Li S."/>
            <person name="Dong L."/>
            <person name="Huang Y."/>
            <person name="Li L."/>
            <person name="Xi Y."/>
            <person name="Qi Q."/>
            <person name="Li W."/>
            <person name="Zhang B."/>
            <person name="Hu W."/>
            <person name="Zhang Y."/>
            <person name="Tian X."/>
            <person name="Jiao Y."/>
            <person name="Liang X."/>
            <person name="Jin J."/>
            <person name="Gao L."/>
            <person name="Zheng W."/>
            <person name="Hao B."/>
            <person name="Liu S.-M."/>
            <person name="Wang W."/>
            <person name="Yuan L."/>
            <person name="Cao M."/>
            <person name="McDermott J."/>
            <person name="Samudrala R."/>
            <person name="Wang J."/>
            <person name="Wong G.K.-S."/>
            <person name="Yang H."/>
        </authorList>
    </citation>
    <scope>NUCLEOTIDE SEQUENCE [LARGE SCALE GENOMIC DNA]</scope>
    <source>
        <strain>cv. Nipponbare</strain>
    </source>
</reference>
<reference key="6">
    <citation type="journal article" date="2003" name="Science">
        <title>Collection, mapping, and annotation of over 28,000 cDNA clones from japonica rice.</title>
        <authorList>
            <consortium name="The rice full-length cDNA consortium"/>
        </authorList>
    </citation>
    <scope>NUCLEOTIDE SEQUENCE [LARGE SCALE MRNA]</scope>
    <source>
        <strain>cv. Nipponbare</strain>
    </source>
</reference>
<comment type="function">
    <text evidence="3">May play a regulatory role in the early step of oligosaccharide elicitor response, downstream of the membrane-associated high-affinity chitin-binding protein.</text>
</comment>
<comment type="subcellular location">
    <subcellularLocation>
        <location evidence="3">Nucleus</location>
    </subcellularLocation>
</comment>
<comment type="induction">
    <text evidence="3">By oligosaccharide elicitor (N-Acetylchitooligosaccharide) extracted from the rice blast fungus (M.grisea) cell wall. Strongest induction by chitin oligomer with greater degree of polymerization (heptamer). By inoculation of M.grisea in rice cell suspension culture.</text>
</comment>
<comment type="miscellaneous">
    <text>Induction by oligosaccharide elicitor is independent of de novo protein synthesis.</text>
</comment>
<comment type="similarity">
    <text evidence="4">Belongs to the GRAS family.</text>
</comment>
<dbReference type="EMBL" id="AY062210">
    <property type="protein sequence ID" value="AAL61821.1"/>
    <property type="molecule type" value="mRNA"/>
</dbReference>
<dbReference type="EMBL" id="AP003747">
    <property type="protein sequence ID" value="BAC55608.1"/>
    <property type="molecule type" value="Genomic_DNA"/>
</dbReference>
<dbReference type="EMBL" id="AP008213">
    <property type="protein sequence ID" value="BAF22029.1"/>
    <property type="molecule type" value="Genomic_DNA"/>
</dbReference>
<dbReference type="EMBL" id="AP014963">
    <property type="protein sequence ID" value="BAT02360.1"/>
    <property type="molecule type" value="Genomic_DNA"/>
</dbReference>
<dbReference type="EMBL" id="CM000144">
    <property type="protein sequence ID" value="EAZ40446.1"/>
    <property type="molecule type" value="Genomic_DNA"/>
</dbReference>
<dbReference type="EMBL" id="AK073470">
    <property type="protein sequence ID" value="BAG93469.1"/>
    <property type="molecule type" value="mRNA"/>
</dbReference>
<dbReference type="EMBL" id="AK098890">
    <property type="protein sequence ID" value="BAG93797.1"/>
    <property type="molecule type" value="mRNA"/>
</dbReference>
<dbReference type="EMBL" id="AK122131">
    <property type="protein sequence ID" value="BAH00810.1"/>
    <property type="molecule type" value="mRNA"/>
</dbReference>
<dbReference type="RefSeq" id="XP_015646745.1">
    <property type="nucleotide sequence ID" value="XM_015791259.1"/>
</dbReference>
<dbReference type="SMR" id="Q8GVE1"/>
<dbReference type="FunCoup" id="Q8GVE1">
    <property type="interactions" value="1334"/>
</dbReference>
<dbReference type="STRING" id="39947.Q8GVE1"/>
<dbReference type="PaxDb" id="39947-Q8GVE1"/>
<dbReference type="EnsemblPlants" id="Os07t0583600-01">
    <property type="protein sequence ID" value="Os07t0583600-01"/>
    <property type="gene ID" value="Os07g0583600"/>
</dbReference>
<dbReference type="EnsemblPlants" id="Os07t0583600-02">
    <property type="protein sequence ID" value="Os07t0583600-02"/>
    <property type="gene ID" value="Os07g0583600"/>
</dbReference>
<dbReference type="Gramene" id="Os07t0583600-01">
    <property type="protein sequence ID" value="Os07t0583600-01"/>
    <property type="gene ID" value="Os07g0583600"/>
</dbReference>
<dbReference type="Gramene" id="Os07t0583600-02">
    <property type="protein sequence ID" value="Os07t0583600-02"/>
    <property type="gene ID" value="Os07g0583600"/>
</dbReference>
<dbReference type="KEGG" id="dosa:Os07g0583600"/>
<dbReference type="eggNOG" id="ENOG502QRZD">
    <property type="taxonomic scope" value="Eukaryota"/>
</dbReference>
<dbReference type="HOGENOM" id="CLU_011924_6_0_1"/>
<dbReference type="InParanoid" id="Q8GVE1"/>
<dbReference type="OMA" id="FAIDLMI"/>
<dbReference type="OrthoDB" id="593669at2759"/>
<dbReference type="Proteomes" id="UP000000763">
    <property type="component" value="Chromosome 7"/>
</dbReference>
<dbReference type="Proteomes" id="UP000007752">
    <property type="component" value="Chromosome 7"/>
</dbReference>
<dbReference type="Proteomes" id="UP000059680">
    <property type="component" value="Chromosome 7"/>
</dbReference>
<dbReference type="ExpressionAtlas" id="Q8GVE1">
    <property type="expression patterns" value="baseline and differential"/>
</dbReference>
<dbReference type="GO" id="GO:0005634">
    <property type="term" value="C:nucleus"/>
    <property type="evidence" value="ECO:0000318"/>
    <property type="project" value="GO_Central"/>
</dbReference>
<dbReference type="GO" id="GO:0003700">
    <property type="term" value="F:DNA-binding transcription factor activity"/>
    <property type="evidence" value="ECO:0000318"/>
    <property type="project" value="GO_Central"/>
</dbReference>
<dbReference type="GO" id="GO:0043565">
    <property type="term" value="F:sequence-specific DNA binding"/>
    <property type="evidence" value="ECO:0000318"/>
    <property type="project" value="GO_Central"/>
</dbReference>
<dbReference type="GO" id="GO:0006355">
    <property type="term" value="P:regulation of DNA-templated transcription"/>
    <property type="evidence" value="ECO:0000318"/>
    <property type="project" value="GO_Central"/>
</dbReference>
<dbReference type="InterPro" id="IPR005202">
    <property type="entry name" value="TF_GRAS"/>
</dbReference>
<dbReference type="PANTHER" id="PTHR31636">
    <property type="entry name" value="OSJNBA0084A10.13 PROTEIN-RELATED"/>
    <property type="match status" value="1"/>
</dbReference>
<dbReference type="Pfam" id="PF03514">
    <property type="entry name" value="GRAS"/>
    <property type="match status" value="1"/>
</dbReference>
<dbReference type="PROSITE" id="PS50985">
    <property type="entry name" value="GRAS"/>
    <property type="match status" value="1"/>
</dbReference>
<name>CIGR2_ORYSJ</name>
<sequence>MADTPTSRMIHPFSNIPSQNLKQFQYSDNPQHPCHPYRAPSDTHVVPHHYGLKSHSPDAGYESQATPNKYTLDSSEGAGCMRHDSPSSQSFTTRSGSPLSQEDSHSDSTDGSPVGASCVTEDPNDLKQKLKDLEAVMLGPDSEIVNSLENSVANQLSLEPEKWVRMMGIPRGNLKELLIACARAVEEKNSFAIDMMIPELRKIVSVSGEPLERLGAYMVEGLVARLASSGISIYKALKCKEPKSSDLLSYMHFLYEACPYFKFGYMSANGAIAEAVKGEDRIHIIDFHISQGAQWISLLQALAARPGGPPTVRITGIDDSVSAYARGGGLELVGRRLSHIASLCKVPFEFHPLAISGSKVEAAHLGVIPGEALAVNFTLELHHIPDESVSTANHRDRLLRMVKSLSPKVLTLVEMESNTNTAPFPQRFAETLDYYTAIFESIDLTLPRDDRERINMEQHCLAREIVNLIACEGEERAERYEPFGKWKARLTMAGFRPSPLSSLVNATIRTLLQSYSDNYKLAERDGALYLGWKSRPLVVSSAWH</sequence>
<feature type="chain" id="PRO_0000132230" description="Chitin-inducible gibberellin-responsive protein 2">
    <location>
        <begin position="1"/>
        <end position="544"/>
    </location>
</feature>
<feature type="domain" description="GRAS" evidence="1">
    <location>
        <begin position="165"/>
        <end position="544"/>
    </location>
</feature>
<feature type="region of interest" description="Disordered" evidence="2">
    <location>
        <begin position="1"/>
        <end position="123"/>
    </location>
</feature>
<feature type="region of interest" description="Leucine repeat I (LRI)" evidence="1">
    <location>
        <begin position="172"/>
        <end position="232"/>
    </location>
</feature>
<feature type="region of interest" description="VHIID" evidence="1">
    <location>
        <begin position="251"/>
        <end position="316"/>
    </location>
</feature>
<feature type="region of interest" description="Leucine repeat II (LRII)" evidence="1">
    <location>
        <begin position="332"/>
        <end position="364"/>
    </location>
</feature>
<feature type="region of interest" description="PFYRE" evidence="1">
    <location>
        <begin position="373"/>
        <end position="467"/>
    </location>
</feature>
<feature type="region of interest" description="SAW" evidence="1">
    <location>
        <begin position="470"/>
        <end position="544"/>
    </location>
</feature>
<feature type="short sequence motif" description="VHIID" evidence="1">
    <location>
        <begin position="282"/>
        <end position="286"/>
    </location>
</feature>
<feature type="compositionally biased region" description="Polar residues" evidence="2">
    <location>
        <begin position="15"/>
        <end position="30"/>
    </location>
</feature>
<feature type="compositionally biased region" description="Polar residues" evidence="2">
    <location>
        <begin position="63"/>
        <end position="74"/>
    </location>
</feature>
<feature type="compositionally biased region" description="Polar residues" evidence="2">
    <location>
        <begin position="86"/>
        <end position="101"/>
    </location>
</feature>
<organism>
    <name type="scientific">Oryza sativa subsp. japonica</name>
    <name type="common">Rice</name>
    <dbReference type="NCBI Taxonomy" id="39947"/>
    <lineage>
        <taxon>Eukaryota</taxon>
        <taxon>Viridiplantae</taxon>
        <taxon>Streptophyta</taxon>
        <taxon>Embryophyta</taxon>
        <taxon>Tracheophyta</taxon>
        <taxon>Spermatophyta</taxon>
        <taxon>Magnoliopsida</taxon>
        <taxon>Liliopsida</taxon>
        <taxon>Poales</taxon>
        <taxon>Poaceae</taxon>
        <taxon>BOP clade</taxon>
        <taxon>Oryzoideae</taxon>
        <taxon>Oryzeae</taxon>
        <taxon>Oryzinae</taxon>
        <taxon>Oryza</taxon>
        <taxon>Oryza sativa</taxon>
    </lineage>
</organism>
<evidence type="ECO:0000255" key="1">
    <source>
        <dbReference type="PROSITE-ProRule" id="PRU01191"/>
    </source>
</evidence>
<evidence type="ECO:0000256" key="2">
    <source>
        <dbReference type="SAM" id="MobiDB-lite"/>
    </source>
</evidence>
<evidence type="ECO:0000269" key="3">
    <source>
    </source>
</evidence>
<evidence type="ECO:0000305" key="4"/>
<evidence type="ECO:0000312" key="5">
    <source>
        <dbReference type="EMBL" id="EAZ40446.1"/>
    </source>
</evidence>
<proteinExistence type="evidence at transcript level"/>
<keyword id="KW-0539">Nucleus</keyword>
<keyword id="KW-1185">Reference proteome</keyword>
<keyword id="KW-0804">Transcription</keyword>
<keyword id="KW-0805">Transcription regulation</keyword>
<protein>
    <recommendedName>
        <fullName>Chitin-inducible gibberellin-responsive protein 2</fullName>
    </recommendedName>
</protein>
<gene>
    <name type="primary">CIGR2</name>
    <name type="ordered locus">Os07g0583600</name>
    <name type="ordered locus">LOC_Os07g39470</name>
    <name type="ORF">OJ1127_E01.113</name>
    <name evidence="5" type="ORF">OsJ_24900</name>
</gene>
<accession>Q8GVE1</accession>
<accession>Q0D544</accession>